<dbReference type="EC" id="4.2.1.59" evidence="1"/>
<dbReference type="EMBL" id="CP001072">
    <property type="protein sequence ID" value="ACD48822.1"/>
    <property type="molecule type" value="Genomic_DNA"/>
</dbReference>
<dbReference type="RefSeq" id="WP_000437109.1">
    <property type="nucleotide sequence ID" value="NC_010698.2"/>
</dbReference>
<dbReference type="SMR" id="B2UVE0"/>
<dbReference type="KEGG" id="hps:HPSH_07120"/>
<dbReference type="HOGENOM" id="CLU_078912_1_0_7"/>
<dbReference type="GO" id="GO:0005737">
    <property type="term" value="C:cytoplasm"/>
    <property type="evidence" value="ECO:0007669"/>
    <property type="project" value="UniProtKB-SubCell"/>
</dbReference>
<dbReference type="GO" id="GO:0016020">
    <property type="term" value="C:membrane"/>
    <property type="evidence" value="ECO:0007669"/>
    <property type="project" value="GOC"/>
</dbReference>
<dbReference type="GO" id="GO:0019171">
    <property type="term" value="F:(3R)-hydroxyacyl-[acyl-carrier-protein] dehydratase activity"/>
    <property type="evidence" value="ECO:0007669"/>
    <property type="project" value="UniProtKB-EC"/>
</dbReference>
<dbReference type="GO" id="GO:0006633">
    <property type="term" value="P:fatty acid biosynthetic process"/>
    <property type="evidence" value="ECO:0007669"/>
    <property type="project" value="UniProtKB-UniRule"/>
</dbReference>
<dbReference type="GO" id="GO:0009245">
    <property type="term" value="P:lipid A biosynthetic process"/>
    <property type="evidence" value="ECO:0007669"/>
    <property type="project" value="UniProtKB-UniRule"/>
</dbReference>
<dbReference type="CDD" id="cd01288">
    <property type="entry name" value="FabZ"/>
    <property type="match status" value="1"/>
</dbReference>
<dbReference type="FunFam" id="3.10.129.10:FF:000001">
    <property type="entry name" value="3-hydroxyacyl-[acyl-carrier-protein] dehydratase FabZ"/>
    <property type="match status" value="1"/>
</dbReference>
<dbReference type="Gene3D" id="3.10.129.10">
    <property type="entry name" value="Hotdog Thioesterase"/>
    <property type="match status" value="1"/>
</dbReference>
<dbReference type="HAMAP" id="MF_00406">
    <property type="entry name" value="FabZ"/>
    <property type="match status" value="1"/>
</dbReference>
<dbReference type="InterPro" id="IPR013114">
    <property type="entry name" value="FabA_FabZ"/>
</dbReference>
<dbReference type="InterPro" id="IPR010084">
    <property type="entry name" value="FabZ"/>
</dbReference>
<dbReference type="InterPro" id="IPR029069">
    <property type="entry name" value="HotDog_dom_sf"/>
</dbReference>
<dbReference type="NCBIfam" id="TIGR01750">
    <property type="entry name" value="fabZ"/>
    <property type="match status" value="1"/>
</dbReference>
<dbReference type="NCBIfam" id="NF000582">
    <property type="entry name" value="PRK00006.1"/>
    <property type="match status" value="1"/>
</dbReference>
<dbReference type="PANTHER" id="PTHR30272">
    <property type="entry name" value="3-HYDROXYACYL-[ACYL-CARRIER-PROTEIN] DEHYDRATASE"/>
    <property type="match status" value="1"/>
</dbReference>
<dbReference type="PANTHER" id="PTHR30272:SF1">
    <property type="entry name" value="3-HYDROXYACYL-[ACYL-CARRIER-PROTEIN] DEHYDRATASE"/>
    <property type="match status" value="1"/>
</dbReference>
<dbReference type="Pfam" id="PF07977">
    <property type="entry name" value="FabA"/>
    <property type="match status" value="1"/>
</dbReference>
<dbReference type="SUPFAM" id="SSF54637">
    <property type="entry name" value="Thioesterase/thiol ester dehydrase-isomerase"/>
    <property type="match status" value="1"/>
</dbReference>
<protein>
    <recommendedName>
        <fullName evidence="1">3-hydroxyacyl-[acyl-carrier-protein] dehydratase FabZ</fullName>
        <ecNumber evidence="1">4.2.1.59</ecNumber>
    </recommendedName>
    <alternativeName>
        <fullName evidence="1">(3R)-hydroxymyristoyl-[acyl-carrier-protein] dehydratase</fullName>
        <shortName evidence="1">(3R)-hydroxymyristoyl-ACP dehydrase</shortName>
    </alternativeName>
    <alternativeName>
        <fullName evidence="1">Beta-hydroxyacyl-ACP dehydratase</fullName>
    </alternativeName>
</protein>
<gene>
    <name evidence="1" type="primary">fabZ</name>
    <name type="ordered locus">HPSH_07120</name>
</gene>
<organism>
    <name type="scientific">Helicobacter pylori (strain Shi470)</name>
    <dbReference type="NCBI Taxonomy" id="512562"/>
    <lineage>
        <taxon>Bacteria</taxon>
        <taxon>Pseudomonadati</taxon>
        <taxon>Campylobacterota</taxon>
        <taxon>Epsilonproteobacteria</taxon>
        <taxon>Campylobacterales</taxon>
        <taxon>Helicobacteraceae</taxon>
        <taxon>Helicobacter</taxon>
    </lineage>
</organism>
<sequence>MEQNHQNLQSQFFIEHILQILPHRYPMLLIDRVVELEANKKIVAYKNITFNEDVFNGHFPDKPIFPGVLIVEGMAQTGGFLAFTSLWGFDPEIAKTKIVYFMTIDKVKFRIPVTPGDRLEYHLEVLKHKGMIWQVGGTAQVDGKVVAEAELKAMIAERD</sequence>
<name>FABZ_HELPS</name>
<proteinExistence type="inferred from homology"/>
<evidence type="ECO:0000255" key="1">
    <source>
        <dbReference type="HAMAP-Rule" id="MF_00406"/>
    </source>
</evidence>
<reference key="1">
    <citation type="submission" date="2008-05" db="EMBL/GenBank/DDBJ databases">
        <title>Genome sequence of Helicobacter pylori from the remote Amazon: traces of Asian ancestry of the first Americans.</title>
        <authorList>
            <person name="Kersulyte D."/>
            <person name="Kalia A."/>
            <person name="Gilman R.H."/>
            <person name="Berg D.E."/>
        </authorList>
    </citation>
    <scope>NUCLEOTIDE SEQUENCE [LARGE SCALE GENOMIC DNA]</scope>
    <source>
        <strain>Shi470</strain>
    </source>
</reference>
<feature type="chain" id="PRO_1000123643" description="3-hydroxyacyl-[acyl-carrier-protein] dehydratase FabZ">
    <location>
        <begin position="1"/>
        <end position="159"/>
    </location>
</feature>
<feature type="active site" evidence="1">
    <location>
        <position position="58"/>
    </location>
</feature>
<keyword id="KW-0963">Cytoplasm</keyword>
<keyword id="KW-0441">Lipid A biosynthesis</keyword>
<keyword id="KW-0444">Lipid biosynthesis</keyword>
<keyword id="KW-0443">Lipid metabolism</keyword>
<keyword id="KW-0456">Lyase</keyword>
<comment type="function">
    <text evidence="1">Involved in unsaturated fatty acids biosynthesis. Catalyzes the dehydration of short chain beta-hydroxyacyl-ACPs and long chain saturated and unsaturated beta-hydroxyacyl-ACPs.</text>
</comment>
<comment type="catalytic activity">
    <reaction evidence="1">
        <text>a (3R)-hydroxyacyl-[ACP] = a (2E)-enoyl-[ACP] + H2O</text>
        <dbReference type="Rhea" id="RHEA:13097"/>
        <dbReference type="Rhea" id="RHEA-COMP:9925"/>
        <dbReference type="Rhea" id="RHEA-COMP:9945"/>
        <dbReference type="ChEBI" id="CHEBI:15377"/>
        <dbReference type="ChEBI" id="CHEBI:78784"/>
        <dbReference type="ChEBI" id="CHEBI:78827"/>
        <dbReference type="EC" id="4.2.1.59"/>
    </reaction>
</comment>
<comment type="subcellular location">
    <subcellularLocation>
        <location evidence="1">Cytoplasm</location>
    </subcellularLocation>
</comment>
<comment type="similarity">
    <text evidence="1">Belongs to the thioester dehydratase family. FabZ subfamily.</text>
</comment>
<accession>B2UVE0</accession>